<name>PG074_MONPV</name>
<keyword id="KW-0244">Early protein</keyword>
<keyword id="KW-0472">Membrane</keyword>
<keyword id="KW-1185">Reference proteome</keyword>
<keyword id="KW-0812">Transmembrane</keyword>
<keyword id="KW-1133">Transmembrane helix</keyword>
<accession>A0A7H0DN47</accession>
<reference key="1">
    <citation type="journal article" date="2022" name="J. Infect. Dis.">
        <title>Exportation of Monkeypox virus from the African continent.</title>
        <authorList>
            <person name="Mauldin M.R."/>
            <person name="McCollum A.M."/>
            <person name="Nakazawa Y.J."/>
            <person name="Mandra A."/>
            <person name="Whitehouse E.R."/>
            <person name="Davidson W."/>
            <person name="Zhao H."/>
            <person name="Gao J."/>
            <person name="Li Y."/>
            <person name="Doty J."/>
            <person name="Yinka-Ogunleye A."/>
            <person name="Akinpelu A."/>
            <person name="Aruna O."/>
            <person name="Naidoo D."/>
            <person name="Lewandowski K."/>
            <person name="Afrough B."/>
            <person name="Graham V."/>
            <person name="Aarons E."/>
            <person name="Hewson R."/>
            <person name="Vipond R."/>
            <person name="Dunning J."/>
            <person name="Chand M."/>
            <person name="Brown C."/>
            <person name="Cohen-Gihon I."/>
            <person name="Erez N."/>
            <person name="Shifman O."/>
            <person name="Israeli O."/>
            <person name="Sharon M."/>
            <person name="Schwartz E."/>
            <person name="Beth-Din A."/>
            <person name="Zvi A."/>
            <person name="Mak T.M."/>
            <person name="Ng Y.K."/>
            <person name="Cui L."/>
            <person name="Lin R.T.P."/>
            <person name="Olson V.A."/>
            <person name="Brooks T."/>
            <person name="Paran N."/>
            <person name="Ihekweazu C."/>
            <person name="Reynolds M.G."/>
        </authorList>
    </citation>
    <scope>NUCLEOTIDE SEQUENCE [LARGE SCALE GENOMIC DNA]</scope>
    <source>
        <strain>MPXV-M5312_HM12_Rivers</strain>
    </source>
</reference>
<proteinExistence type="inferred from homology"/>
<gene>
    <name type="primary">OPG074</name>
    <name evidence="4" type="ORF">MPXV-M5312_HM12_Rivers-058</name>
</gene>
<organism evidence="4 5">
    <name type="scientific">Monkeypox virus</name>
    <dbReference type="NCBI Taxonomy" id="10244"/>
    <lineage>
        <taxon>Viruses</taxon>
        <taxon>Varidnaviria</taxon>
        <taxon>Bamfordvirae</taxon>
        <taxon>Nucleocytoviricota</taxon>
        <taxon>Pokkesviricetes</taxon>
        <taxon>Chitovirales</taxon>
        <taxon>Poxviridae</taxon>
        <taxon>Chordopoxvirinae</taxon>
        <taxon>Orthopoxvirus</taxon>
    </lineage>
</organism>
<organismHost>
    <name type="scientific">Cynomys gunnisoni</name>
    <name type="common">Gunnison's prairie dog</name>
    <name type="synonym">Spermophilus gunnisoni</name>
    <dbReference type="NCBI Taxonomy" id="45479"/>
</organismHost>
<organismHost>
    <name type="scientific">Cynomys leucurus</name>
    <name type="common">White-tailed prairie dog</name>
    <dbReference type="NCBI Taxonomy" id="99825"/>
</organismHost>
<organismHost>
    <name type="scientific">Cynomys ludovicianus</name>
    <name type="common">Black-tailed prairie dog</name>
    <dbReference type="NCBI Taxonomy" id="45480"/>
</organismHost>
<organismHost>
    <name type="scientific">Cynomys mexicanus</name>
    <name type="common">Mexican prairie dog</name>
    <dbReference type="NCBI Taxonomy" id="99826"/>
</organismHost>
<organismHost>
    <name type="scientific">Cynomys parvidens</name>
    <name type="common">Utah prairie dog</name>
    <dbReference type="NCBI Taxonomy" id="99827"/>
</organismHost>
<organismHost>
    <name type="scientific">Gliridae</name>
    <name type="common">dormice</name>
    <dbReference type="NCBI Taxonomy" id="30650"/>
</organismHost>
<organismHost>
    <name type="scientific">Heliosciurus ruwenzorii</name>
    <name type="common">Ruwenzori sun squirrel</name>
    <dbReference type="NCBI Taxonomy" id="226685"/>
</organismHost>
<organismHost>
    <name type="scientific">Homo sapiens</name>
    <name type="common">Human</name>
    <dbReference type="NCBI Taxonomy" id="9606"/>
</organismHost>
<organismHost>
    <name type="scientific">Mus musculus</name>
    <name type="common">Mouse</name>
    <dbReference type="NCBI Taxonomy" id="10090"/>
</organismHost>
<sequence length="665" mass="77629">MFMYPEFARKALSKLISKKLNIEKVSSKHQLVLLDYGLHGLLPKSLYLEAINSDILNVRFFPPEIINVTDIVKALQNSCRVDEYLKAVSLYHKNSLMVSGPNVVKLMIEYNLLTHSDLEWLINENVVKATYLLKINAYMINFKIDLTVDEIIDLVKDIPVGATLHLYNILNNIDLDIILRISDEYNIPPVHDILSKLTNEEMCIKLVTKYPMDNVINFINQDVRYSPTFIKTIKDFVNEHLPTMYDGLNDYLHSVIIDEDLIEEYKIKSVAMFNLEYKTDIDTLTLDEQIFVEVNISYYDFRYRQFADEFRDYIMIKERRQITMQSGDRIRRFRRPMSLRSTIIKKDTDSLEDILSHIDNAKKNSKVSIEDVERIISSFRLNPCVVRRTMLSDIDIKTKIMVLKIAKDWKSCTLTLSVKGIMVTDTINTVLSKILHHHRNIFKYLTSVENKEIAVCNCSRCLSLFYRKLKSVRCDLRTDDGLLDRLYDLTRYALHGKINQNLIGQRCWGPLTEILFNENKKKKLNNLMEYIKISDMLVYGHYIEKTLIPITDSLSFKLFVDTMSVLNDQYAKVVIFFNTIIEYIIATIYYRLTVLDNYTNVKHFVSKVLHTVMEACGVLFSHIKVNDKIEYELEEMVDKGTVPSYLYHLSINVISIILDDINGTR</sequence>
<protein>
    <recommendedName>
        <fullName>Protein OPG074</fullName>
    </recommendedName>
</protein>
<comment type="subcellular location">
    <subcellularLocation>
        <location evidence="2">Membrane</location>
        <topology evidence="2">Single-pass membrane protein</topology>
    </subcellularLocation>
</comment>
<comment type="induction">
    <text evidence="1">Expressed in the early phase of the viral replicative cycle.</text>
</comment>
<comment type="similarity">
    <text evidence="3">Belongs to the orthopoxvirus OPG074 family.</text>
</comment>
<evidence type="ECO:0000250" key="1">
    <source>
        <dbReference type="UniProtKB" id="Q80HX1"/>
    </source>
</evidence>
<evidence type="ECO:0000255" key="2"/>
<evidence type="ECO:0000305" key="3"/>
<evidence type="ECO:0000312" key="4">
    <source>
        <dbReference type="EMBL" id="QNP12930.1"/>
    </source>
</evidence>
<evidence type="ECO:0000312" key="5">
    <source>
        <dbReference type="Proteomes" id="UP000516359"/>
    </source>
</evidence>
<feature type="chain" id="PRO_0000457693" description="Protein OPG074">
    <location>
        <begin position="1"/>
        <end position="665"/>
    </location>
</feature>
<feature type="transmembrane region" description="Helical" evidence="2">
    <location>
        <begin position="573"/>
        <end position="595"/>
    </location>
</feature>
<dbReference type="EMBL" id="MT903340">
    <property type="protein sequence ID" value="QNP12930.1"/>
    <property type="molecule type" value="Genomic_DNA"/>
</dbReference>
<dbReference type="RefSeq" id="YP_010377057.1">
    <property type="nucleotide sequence ID" value="NC_063383.1"/>
</dbReference>
<dbReference type="GeneID" id="72551469"/>
<dbReference type="Proteomes" id="UP000516359">
    <property type="component" value="Genome"/>
</dbReference>
<dbReference type="GO" id="GO:0016020">
    <property type="term" value="C:membrane"/>
    <property type="evidence" value="ECO:0007669"/>
    <property type="project" value="UniProtKB-SubCell"/>
</dbReference>
<dbReference type="InterPro" id="IPR021155">
    <property type="entry name" value="Poxvirus_E2/O1"/>
</dbReference>
<dbReference type="InterPro" id="IPR006732">
    <property type="entry name" value="Poxvirus_O1"/>
</dbReference>
<dbReference type="Pfam" id="PF04497">
    <property type="entry name" value="Pox_E2-like"/>
    <property type="match status" value="2"/>
</dbReference>
<dbReference type="PIRSF" id="PIRSF015980">
    <property type="entry name" value="VAC_O1L"/>
    <property type="match status" value="1"/>
</dbReference>